<name>RS15_TOLAT</name>
<sequence length="89" mass="10166">MSLNAETKAKIVADFSRGTNDTGSPEVQVALLTAQINHLQGHFSVHSKDHHGRRGLLRMVSQRRKLLDYLKRKDDARYKDLISKLGLRR</sequence>
<organism>
    <name type="scientific">Tolumonas auensis (strain DSM 9187 / NBRC 110442 / TA 4)</name>
    <dbReference type="NCBI Taxonomy" id="595494"/>
    <lineage>
        <taxon>Bacteria</taxon>
        <taxon>Pseudomonadati</taxon>
        <taxon>Pseudomonadota</taxon>
        <taxon>Gammaproteobacteria</taxon>
        <taxon>Aeromonadales</taxon>
        <taxon>Aeromonadaceae</taxon>
        <taxon>Tolumonas</taxon>
    </lineage>
</organism>
<reference key="1">
    <citation type="submission" date="2009-05" db="EMBL/GenBank/DDBJ databases">
        <title>Complete sequence of Tolumonas auensis DSM 9187.</title>
        <authorList>
            <consortium name="US DOE Joint Genome Institute"/>
            <person name="Lucas S."/>
            <person name="Copeland A."/>
            <person name="Lapidus A."/>
            <person name="Glavina del Rio T."/>
            <person name="Tice H."/>
            <person name="Bruce D."/>
            <person name="Goodwin L."/>
            <person name="Pitluck S."/>
            <person name="Chertkov O."/>
            <person name="Brettin T."/>
            <person name="Detter J.C."/>
            <person name="Han C."/>
            <person name="Larimer F."/>
            <person name="Land M."/>
            <person name="Hauser L."/>
            <person name="Kyrpides N."/>
            <person name="Mikhailova N."/>
            <person name="Spring S."/>
            <person name="Beller H."/>
        </authorList>
    </citation>
    <scope>NUCLEOTIDE SEQUENCE [LARGE SCALE GENOMIC DNA]</scope>
    <source>
        <strain>DSM 9187 / NBRC 110442 / TA 4</strain>
    </source>
</reference>
<dbReference type="EMBL" id="CP001616">
    <property type="protein sequence ID" value="ACQ93841.1"/>
    <property type="molecule type" value="Genomic_DNA"/>
</dbReference>
<dbReference type="RefSeq" id="WP_015879309.1">
    <property type="nucleotide sequence ID" value="NC_012691.1"/>
</dbReference>
<dbReference type="SMR" id="C4L8X1"/>
<dbReference type="STRING" id="595494.Tola_2243"/>
<dbReference type="KEGG" id="tau:Tola_2243"/>
<dbReference type="eggNOG" id="COG0184">
    <property type="taxonomic scope" value="Bacteria"/>
</dbReference>
<dbReference type="HOGENOM" id="CLU_148518_0_0_6"/>
<dbReference type="OrthoDB" id="9799262at2"/>
<dbReference type="Proteomes" id="UP000009073">
    <property type="component" value="Chromosome"/>
</dbReference>
<dbReference type="GO" id="GO:0022627">
    <property type="term" value="C:cytosolic small ribosomal subunit"/>
    <property type="evidence" value="ECO:0007669"/>
    <property type="project" value="TreeGrafter"/>
</dbReference>
<dbReference type="GO" id="GO:0019843">
    <property type="term" value="F:rRNA binding"/>
    <property type="evidence" value="ECO:0007669"/>
    <property type="project" value="UniProtKB-UniRule"/>
</dbReference>
<dbReference type="GO" id="GO:0003735">
    <property type="term" value="F:structural constituent of ribosome"/>
    <property type="evidence" value="ECO:0007669"/>
    <property type="project" value="InterPro"/>
</dbReference>
<dbReference type="GO" id="GO:0006412">
    <property type="term" value="P:translation"/>
    <property type="evidence" value="ECO:0007669"/>
    <property type="project" value="UniProtKB-UniRule"/>
</dbReference>
<dbReference type="CDD" id="cd00353">
    <property type="entry name" value="Ribosomal_S15p_S13e"/>
    <property type="match status" value="1"/>
</dbReference>
<dbReference type="FunFam" id="1.10.287.10:FF:000002">
    <property type="entry name" value="30S ribosomal protein S15"/>
    <property type="match status" value="1"/>
</dbReference>
<dbReference type="Gene3D" id="6.10.250.3130">
    <property type="match status" value="1"/>
</dbReference>
<dbReference type="Gene3D" id="1.10.287.10">
    <property type="entry name" value="S15/NS1, RNA-binding"/>
    <property type="match status" value="1"/>
</dbReference>
<dbReference type="HAMAP" id="MF_01343_B">
    <property type="entry name" value="Ribosomal_uS15_B"/>
    <property type="match status" value="1"/>
</dbReference>
<dbReference type="InterPro" id="IPR000589">
    <property type="entry name" value="Ribosomal_uS15"/>
</dbReference>
<dbReference type="InterPro" id="IPR005290">
    <property type="entry name" value="Ribosomal_uS15_bac-type"/>
</dbReference>
<dbReference type="InterPro" id="IPR009068">
    <property type="entry name" value="uS15_NS1_RNA-bd_sf"/>
</dbReference>
<dbReference type="NCBIfam" id="TIGR00952">
    <property type="entry name" value="S15_bact"/>
    <property type="match status" value="1"/>
</dbReference>
<dbReference type="PANTHER" id="PTHR23321">
    <property type="entry name" value="RIBOSOMAL PROTEIN S15, BACTERIAL AND ORGANELLAR"/>
    <property type="match status" value="1"/>
</dbReference>
<dbReference type="PANTHER" id="PTHR23321:SF26">
    <property type="entry name" value="SMALL RIBOSOMAL SUBUNIT PROTEIN US15M"/>
    <property type="match status" value="1"/>
</dbReference>
<dbReference type="Pfam" id="PF00312">
    <property type="entry name" value="Ribosomal_S15"/>
    <property type="match status" value="1"/>
</dbReference>
<dbReference type="SMART" id="SM01387">
    <property type="entry name" value="Ribosomal_S15"/>
    <property type="match status" value="1"/>
</dbReference>
<dbReference type="SUPFAM" id="SSF47060">
    <property type="entry name" value="S15/NS1 RNA-binding domain"/>
    <property type="match status" value="1"/>
</dbReference>
<gene>
    <name evidence="1" type="primary">rpsO</name>
    <name type="ordered locus">Tola_2243</name>
</gene>
<accession>C4L8X1</accession>
<feature type="chain" id="PRO_1000214772" description="Small ribosomal subunit protein uS15">
    <location>
        <begin position="1"/>
        <end position="89"/>
    </location>
</feature>
<keyword id="KW-1185">Reference proteome</keyword>
<keyword id="KW-0687">Ribonucleoprotein</keyword>
<keyword id="KW-0689">Ribosomal protein</keyword>
<keyword id="KW-0694">RNA-binding</keyword>
<keyword id="KW-0699">rRNA-binding</keyword>
<evidence type="ECO:0000255" key="1">
    <source>
        <dbReference type="HAMAP-Rule" id="MF_01343"/>
    </source>
</evidence>
<evidence type="ECO:0000305" key="2"/>
<comment type="function">
    <text evidence="1">One of the primary rRNA binding proteins, it binds directly to 16S rRNA where it helps nucleate assembly of the platform of the 30S subunit by binding and bridging several RNA helices of the 16S rRNA.</text>
</comment>
<comment type="function">
    <text evidence="1">Forms an intersubunit bridge (bridge B4) with the 23S rRNA of the 50S subunit in the ribosome.</text>
</comment>
<comment type="subunit">
    <text evidence="1">Part of the 30S ribosomal subunit. Forms a bridge to the 50S subunit in the 70S ribosome, contacting the 23S rRNA.</text>
</comment>
<comment type="similarity">
    <text evidence="1">Belongs to the universal ribosomal protein uS15 family.</text>
</comment>
<proteinExistence type="inferred from homology"/>
<protein>
    <recommendedName>
        <fullName evidence="1">Small ribosomal subunit protein uS15</fullName>
    </recommendedName>
    <alternativeName>
        <fullName evidence="2">30S ribosomal protein S15</fullName>
    </alternativeName>
</protein>